<feature type="signal peptide" evidence="1">
    <location>
        <begin position="1"/>
        <end position="35"/>
    </location>
</feature>
<feature type="chain" id="PRO_0000023818" description="Cytochrome f">
    <location>
        <begin position="36"/>
        <end position="320"/>
    </location>
</feature>
<feature type="transmembrane region" description="Helical" evidence="2">
    <location>
        <begin position="286"/>
        <end position="305"/>
    </location>
</feature>
<feature type="binding site" description="axial binding residue" evidence="1">
    <location>
        <position position="36"/>
    </location>
    <ligand>
        <name>heme</name>
        <dbReference type="ChEBI" id="CHEBI:30413"/>
    </ligand>
    <ligandPart>
        <name>Fe</name>
        <dbReference type="ChEBI" id="CHEBI:18248"/>
    </ligandPart>
</feature>
<feature type="binding site" description="covalent" evidence="1">
    <location>
        <position position="56"/>
    </location>
    <ligand>
        <name>heme</name>
        <dbReference type="ChEBI" id="CHEBI:30413"/>
    </ligand>
</feature>
<feature type="binding site" description="covalent" evidence="1">
    <location>
        <position position="59"/>
    </location>
    <ligand>
        <name>heme</name>
        <dbReference type="ChEBI" id="CHEBI:30413"/>
    </ligand>
</feature>
<feature type="binding site" description="axial binding residue" evidence="1">
    <location>
        <position position="60"/>
    </location>
    <ligand>
        <name>heme</name>
        <dbReference type="ChEBI" id="CHEBI:30413"/>
    </ligand>
    <ligandPart>
        <name>Fe</name>
        <dbReference type="ChEBI" id="CHEBI:18248"/>
    </ligandPart>
</feature>
<dbReference type="EMBL" id="X86563">
    <property type="protein sequence ID" value="CAA60298.1"/>
    <property type="molecule type" value="Genomic_DNA"/>
</dbReference>
<dbReference type="PIR" id="S58564">
    <property type="entry name" value="S58564"/>
</dbReference>
<dbReference type="RefSeq" id="NP_043037.1">
    <property type="nucleotide sequence ID" value="NC_001666.2"/>
</dbReference>
<dbReference type="SMR" id="P46617"/>
<dbReference type="FunCoup" id="P46617">
    <property type="interactions" value="663"/>
</dbReference>
<dbReference type="STRING" id="4577.P46617"/>
<dbReference type="PaxDb" id="4577-GRMZM2G448174_P01"/>
<dbReference type="GeneID" id="845191"/>
<dbReference type="KEGG" id="zma:845191"/>
<dbReference type="MaizeGDB" id="56850"/>
<dbReference type="eggNOG" id="ENOG502QPT8">
    <property type="taxonomic scope" value="Eukaryota"/>
</dbReference>
<dbReference type="InParanoid" id="P46617"/>
<dbReference type="OrthoDB" id="604292at2759"/>
<dbReference type="Proteomes" id="UP000007305">
    <property type="component" value="Chloroplast"/>
</dbReference>
<dbReference type="GO" id="GO:0009535">
    <property type="term" value="C:chloroplast thylakoid membrane"/>
    <property type="evidence" value="ECO:0007669"/>
    <property type="project" value="UniProtKB-SubCell"/>
</dbReference>
<dbReference type="GO" id="GO:0009055">
    <property type="term" value="F:electron transfer activity"/>
    <property type="evidence" value="ECO:0007669"/>
    <property type="project" value="UniProtKB-UniRule"/>
</dbReference>
<dbReference type="GO" id="GO:0020037">
    <property type="term" value="F:heme binding"/>
    <property type="evidence" value="ECO:0007669"/>
    <property type="project" value="InterPro"/>
</dbReference>
<dbReference type="GO" id="GO:0005506">
    <property type="term" value="F:iron ion binding"/>
    <property type="evidence" value="ECO:0007669"/>
    <property type="project" value="InterPro"/>
</dbReference>
<dbReference type="GO" id="GO:0015979">
    <property type="term" value="P:photosynthesis"/>
    <property type="evidence" value="ECO:0007669"/>
    <property type="project" value="UniProtKB-UniRule"/>
</dbReference>
<dbReference type="FunFam" id="1.20.5.700:FF:000001">
    <property type="entry name" value="Cytochrome f"/>
    <property type="match status" value="1"/>
</dbReference>
<dbReference type="FunFam" id="2.40.50.100:FF:000007">
    <property type="entry name" value="Cytochrome f"/>
    <property type="match status" value="1"/>
</dbReference>
<dbReference type="FunFam" id="2.60.40.830:FF:000001">
    <property type="entry name" value="Cytochrome f"/>
    <property type="match status" value="1"/>
</dbReference>
<dbReference type="Gene3D" id="2.40.50.100">
    <property type="match status" value="1"/>
</dbReference>
<dbReference type="Gene3D" id="2.60.40.830">
    <property type="entry name" value="Cytochrome f large domain"/>
    <property type="match status" value="1"/>
</dbReference>
<dbReference type="Gene3D" id="1.20.5.700">
    <property type="entry name" value="Single helix bin"/>
    <property type="match status" value="1"/>
</dbReference>
<dbReference type="HAMAP" id="MF_00610">
    <property type="entry name" value="Cytb6_f_cytF"/>
    <property type="match status" value="1"/>
</dbReference>
<dbReference type="InterPro" id="IPR024058">
    <property type="entry name" value="Cyt-f_TM"/>
</dbReference>
<dbReference type="InterPro" id="IPR002325">
    <property type="entry name" value="Cyt_f"/>
</dbReference>
<dbReference type="InterPro" id="IPR024094">
    <property type="entry name" value="Cyt_f_lg_dom"/>
</dbReference>
<dbReference type="InterPro" id="IPR036826">
    <property type="entry name" value="Cyt_f_lg_dom_sf"/>
</dbReference>
<dbReference type="InterPro" id="IPR011054">
    <property type="entry name" value="Rudment_hybrid_motif"/>
</dbReference>
<dbReference type="PANTHER" id="PTHR33288">
    <property type="match status" value="1"/>
</dbReference>
<dbReference type="PANTHER" id="PTHR33288:SF10">
    <property type="entry name" value="CYTOCHROME F"/>
    <property type="match status" value="1"/>
</dbReference>
<dbReference type="Pfam" id="PF01333">
    <property type="entry name" value="Apocytochr_F_C"/>
    <property type="match status" value="1"/>
</dbReference>
<dbReference type="Pfam" id="PF16639">
    <property type="entry name" value="Apocytochr_F_N"/>
    <property type="match status" value="1"/>
</dbReference>
<dbReference type="PRINTS" id="PR00610">
    <property type="entry name" value="CYTOCHROMEF"/>
</dbReference>
<dbReference type="SUPFAM" id="SSF103431">
    <property type="entry name" value="Cytochrome f subunit of the cytochrome b6f complex, transmembrane anchor"/>
    <property type="match status" value="1"/>
</dbReference>
<dbReference type="SUPFAM" id="SSF49441">
    <property type="entry name" value="Cytochrome f, large domain"/>
    <property type="match status" value="1"/>
</dbReference>
<dbReference type="SUPFAM" id="SSF51246">
    <property type="entry name" value="Rudiment single hybrid motif"/>
    <property type="match status" value="1"/>
</dbReference>
<dbReference type="PROSITE" id="PS51010">
    <property type="entry name" value="CYTF"/>
    <property type="match status" value="1"/>
</dbReference>
<proteinExistence type="inferred from homology"/>
<reference key="1">
    <citation type="journal article" date="1995" name="J. Mol. Biol.">
        <title>Complete sequence of the maize chloroplast genome: gene content, hotspots of divergence and fine tuning of genetic information by transcript editing.</title>
        <authorList>
            <person name="Maier R.M."/>
            <person name="Neckermann K."/>
            <person name="Igloi G.L."/>
            <person name="Koessel H."/>
        </authorList>
    </citation>
    <scope>NUCLEOTIDE SEQUENCE [LARGE SCALE GENOMIC DNA]</scope>
    <source>
        <strain>cv. B73</strain>
    </source>
</reference>
<name>CYF_MAIZE</name>
<accession>P46617</accession>
<sequence length="320" mass="35511">MENRKTFSWLKEQMIRSISVSIMIYVITRTSISNAYPIFAQQGYENPREATGRIVCANCHLANKPVDIEVPQAVLPDTVFEAVLRIPYDMQLKQVLANGKKGGLNVGAVLILPEGFELAPPDRISPELKEKIGNLSFQSYRPNKKNILVIGPVPGKKYSEIVFPILSPDPATKKDVHFLKYPIYVGGNRGRGQIYPDGSKSNNTVYNATSTGIVKKILRKEKGGYEISIVDASDGRQVIDIIPPGPELLFSEGESIKLDQPLTSNPNVGGFGQGDAEIVLQDPLRVQGLLFFFASVILAQVFLVLKKKQFEKVQLYEMNF</sequence>
<evidence type="ECO:0000250" key="1"/>
<evidence type="ECO:0000255" key="2"/>
<evidence type="ECO:0000305" key="3"/>
<protein>
    <recommendedName>
        <fullName>Cytochrome f</fullName>
    </recommendedName>
</protein>
<keyword id="KW-0150">Chloroplast</keyword>
<keyword id="KW-0249">Electron transport</keyword>
<keyword id="KW-0349">Heme</keyword>
<keyword id="KW-0408">Iron</keyword>
<keyword id="KW-0472">Membrane</keyword>
<keyword id="KW-0479">Metal-binding</keyword>
<keyword id="KW-0602">Photosynthesis</keyword>
<keyword id="KW-0934">Plastid</keyword>
<keyword id="KW-1185">Reference proteome</keyword>
<keyword id="KW-0732">Signal</keyword>
<keyword id="KW-0793">Thylakoid</keyword>
<keyword id="KW-0812">Transmembrane</keyword>
<keyword id="KW-1133">Transmembrane helix</keyword>
<keyword id="KW-0813">Transport</keyword>
<organism>
    <name type="scientific">Zea mays</name>
    <name type="common">Maize</name>
    <dbReference type="NCBI Taxonomy" id="4577"/>
    <lineage>
        <taxon>Eukaryota</taxon>
        <taxon>Viridiplantae</taxon>
        <taxon>Streptophyta</taxon>
        <taxon>Embryophyta</taxon>
        <taxon>Tracheophyta</taxon>
        <taxon>Spermatophyta</taxon>
        <taxon>Magnoliopsida</taxon>
        <taxon>Liliopsida</taxon>
        <taxon>Poales</taxon>
        <taxon>Poaceae</taxon>
        <taxon>PACMAD clade</taxon>
        <taxon>Panicoideae</taxon>
        <taxon>Andropogonodae</taxon>
        <taxon>Andropogoneae</taxon>
        <taxon>Tripsacinae</taxon>
        <taxon>Zea</taxon>
    </lineage>
</organism>
<comment type="function">
    <text evidence="1">Component of the cytochrome b6-f complex, which mediates electron transfer between photosystem II (PSII) and photosystem I (PSI), cyclic electron flow around PSI, and state transitions.</text>
</comment>
<comment type="cofactor">
    <cofactor evidence="1">
        <name>heme</name>
        <dbReference type="ChEBI" id="CHEBI:30413"/>
    </cofactor>
    <text evidence="1">Binds 1 heme group covalently.</text>
</comment>
<comment type="subunit">
    <text evidence="1">The 4 large subunits of the cytochrome b6-f complex are cytochrome b6, subunit IV (17 kDa polypeptide, petD), cytochrome f and the Rieske protein, while the 4 small subunits are PetG, PetL, PetM and PetN. The complex functions as a dimer (By similarity).</text>
</comment>
<comment type="subcellular location">
    <subcellularLocation>
        <location evidence="1">Plastid</location>
        <location evidence="1">Chloroplast thylakoid membrane</location>
        <topology evidence="1">Single-pass membrane protein</topology>
    </subcellularLocation>
</comment>
<comment type="similarity">
    <text evidence="3">Belongs to the cytochrome f family.</text>
</comment>
<gene>
    <name type="primary">petA</name>
</gene>
<geneLocation type="chloroplast"/>